<proteinExistence type="evidence at protein level"/>
<organismHost>
    <name type="scientific">Mus musculus</name>
    <name type="common">Mouse</name>
    <dbReference type="NCBI Taxonomy" id="10090"/>
</organismHost>
<name>MT_POVMA</name>
<dbReference type="EMBL" id="J02288">
    <property type="protein sequence ID" value="AAB59900.1"/>
    <property type="molecule type" value="Genomic_DNA"/>
</dbReference>
<dbReference type="PDB" id="1YGU">
    <property type="method" value="X-ray"/>
    <property type="resolution" value="2.90 A"/>
    <property type="chains" value="C/D=248-251"/>
</dbReference>
<dbReference type="PDBsum" id="1YGU"/>
<dbReference type="SMR" id="P03077"/>
<dbReference type="ELM" id="P03077"/>
<dbReference type="iPTMnet" id="P03077"/>
<dbReference type="EvolutionaryTrace" id="P03077"/>
<dbReference type="Proteomes" id="UP000008479">
    <property type="component" value="Genome"/>
</dbReference>
<dbReference type="GO" id="GO:0033644">
    <property type="term" value="C:host cell membrane"/>
    <property type="evidence" value="ECO:0007669"/>
    <property type="project" value="UniProtKB-SubCell"/>
</dbReference>
<dbReference type="GO" id="GO:0016020">
    <property type="term" value="C:membrane"/>
    <property type="evidence" value="ECO:0007669"/>
    <property type="project" value="UniProtKB-KW"/>
</dbReference>
<dbReference type="Gene3D" id="1.10.287.110">
    <property type="entry name" value="DnaJ domain"/>
    <property type="match status" value="1"/>
</dbReference>
<dbReference type="Gene3D" id="1.20.120.1860">
    <property type="entry name" value="Small t-antigen, unique domain"/>
    <property type="match status" value="1"/>
</dbReference>
<dbReference type="IDEAL" id="IID90016"/>
<dbReference type="InterPro" id="IPR001623">
    <property type="entry name" value="DnaJ_domain"/>
</dbReference>
<dbReference type="InterPro" id="IPR036869">
    <property type="entry name" value="J_dom_sf"/>
</dbReference>
<dbReference type="InterPro" id="IPR003354">
    <property type="entry name" value="Papo_T_antigen"/>
</dbReference>
<dbReference type="InterPro" id="IPR036092">
    <property type="entry name" value="Papo_T_antigensf"/>
</dbReference>
<dbReference type="Pfam" id="PF02380">
    <property type="entry name" value="Papo_T_antigen"/>
    <property type="match status" value="1"/>
</dbReference>
<dbReference type="SMART" id="SM00271">
    <property type="entry name" value="DnaJ"/>
    <property type="match status" value="1"/>
</dbReference>
<dbReference type="SUPFAM" id="SSF46565">
    <property type="entry name" value="Chaperone J-domain"/>
    <property type="match status" value="1"/>
</dbReference>
<dbReference type="SUPFAM" id="SSF161240">
    <property type="entry name" value="T-antigen specific domain-like"/>
    <property type="match status" value="1"/>
</dbReference>
<sequence>MDRVLSRADKERLLELLKLPRQLWGDFGRMQQAYKQQSLLLHPDKGGSHALMQELNSLWGTFKTEVYNLRMNLGGTGFQVRRLHADGWNLSTKDTFGDRYYQRFCRMPLTCLVNVKYSSCSCILCLLRKQHRELKDKCDARCLVLGECFCLECYMQWFGTPTRDVLNLYADFIASMPIDWLDLDVHSVYNPKRRSEELRRAATVHYTMTTGHSAMEASTSQGNGMISSESGTPATSRRLRLPSLLSNPTYSVMRSHSYPPTRVLQQIHPHILLEEDEILVLLSPMTAYPRTPPELLYPESDQDQLEPLEEEEEEYMPMEDLYLDILPGEQVPQLIPPPIIPRAGLSPWEGLILRDLQRAHFDPILDASQRMRATHRAALRAHSMQRHLRRLGRTLLLVTFLAALLGICLMLFILIKRSRHF</sequence>
<feature type="chain" id="PRO_0000115049" description="Middle T antigen">
    <location>
        <begin position="1"/>
        <end position="421"/>
    </location>
</feature>
<feature type="topological domain" description="Cytoplasmic" evidence="1">
    <location>
        <begin position="1"/>
        <end position="394"/>
    </location>
</feature>
<feature type="transmembrane region" description="Helical" evidence="1">
    <location>
        <begin position="395"/>
        <end position="415"/>
    </location>
</feature>
<feature type="topological domain" description="Extracellular" evidence="1">
    <location>
        <begin position="416"/>
        <end position="421"/>
    </location>
</feature>
<feature type="domain" description="J">
    <location>
        <begin position="12"/>
        <end position="75"/>
    </location>
</feature>
<feature type="region of interest" description="Disordered" evidence="2">
    <location>
        <begin position="215"/>
        <end position="237"/>
    </location>
</feature>
<feature type="compositionally biased region" description="Polar residues" evidence="2">
    <location>
        <begin position="215"/>
        <end position="235"/>
    </location>
</feature>
<feature type="modified residue" description="Phosphotyrosine; by host" evidence="10">
    <location>
        <position position="250"/>
    </location>
</feature>
<feature type="modified residue" description="Phosphoserine; by host" evidence="12">
    <location>
        <position position="257"/>
    </location>
</feature>
<feature type="modified residue" description="Phosphotyrosine; by host" evidence="9">
    <location>
        <position position="315"/>
    </location>
</feature>
<feature type="modified residue" description="Phosphotyrosine; by host" evidence="9">
    <location>
        <position position="322"/>
    </location>
</feature>
<feature type="mutagenesis site" description="Complete loss of transformation ability." evidence="8">
    <original>T</original>
    <variation>A</variation>
    <location>
        <position position="160"/>
    </location>
</feature>
<feature type="mutagenesis site" description="Complete loss of association with host Shc1." evidence="10">
    <original>P</original>
    <variation>H</variation>
    <location>
        <position position="248"/>
    </location>
</feature>
<feature type="mutagenesis site" description="Complete loss of association with host Shc1." evidence="10">
    <original>Y</original>
    <variation>F</variation>
    <location>
        <position position="250"/>
    </location>
</feature>
<feature type="mutagenesis site" description="Complete loss of interaction with host Ywhaz." evidence="12">
    <original>S</original>
    <variation>A</variation>
    <location>
        <position position="257"/>
    </location>
</feature>
<feature type="mutagenesis site" description="90% loss of association with host p85." evidence="9">
    <original>Y</original>
    <variation>F</variation>
    <location>
        <position position="315"/>
    </location>
</feature>
<feature type="mutagenesis site" description="Complete loss of association with host Plcg1." evidence="9">
    <original>Y</original>
    <variation>F</variation>
    <location>
        <position position="322"/>
    </location>
</feature>
<protein>
    <recommendedName>
        <fullName>Middle T antigen</fullName>
        <shortName>MT</shortName>
        <shortName>MT-AG</shortName>
    </recommendedName>
</protein>
<comment type="function">
    <text evidence="3">Plays a role in transformation by modulating the activities of cellular proteins involved in control of cell proliferation and by acting as a functional homolog of an activated tyrosine kinase-associated growth-factor receptor. Recruits upon association with host Ppp2/PP2A the Src tyrosine kinase components Src, Yes and Fyn, thereby activating their kinase activity. Activation of Shc1, Pclg1 and p85 mediate signal transduction pathways leading to cell cycle progression and cell division. MT also plays a role in regulation of early and late gene expression and in viral DNA replication.</text>
</comment>
<comment type="subunit">
    <text evidence="4 5 6 7 9 10 11">Interacts with host Ppp2/PP2A A and C subunits; this interaction alters Ppp2/PP2A substrate specificity and localization. Interacts with host Src, Yes1, and Fyn. Interacts with host Shc1, Plcg1 and p85; these interactions lead to cell cycle progression. Interacts with host 14-3-3 proteins.</text>
</comment>
<comment type="subcellular location">
    <subcellularLocation>
        <location evidence="13">Host membrane</location>
        <topology evidence="13">Single-pass membrane protein</topology>
    </subcellularLocation>
</comment>
<comment type="alternative products">
    <event type="alternative splicing"/>
    <isoform>
        <id>P03077-1</id>
        <name>Middle T antigen</name>
        <sequence type="displayed"/>
    </isoform>
    <isoform>
        <id>P68835-1</id>
        <name>Small t antigen</name>
        <sequence type="external"/>
    </isoform>
    <isoform>
        <id>P03073-1</id>
        <name>Large T antigen</name>
        <sequence type="external"/>
    </isoform>
</comment>
<comment type="domain">
    <text evidence="10">The NPTY motif is required for interaction with host Shc1 protein.</text>
</comment>
<comment type="PTM">
    <text evidence="9 10 12">Tyrosine-phosphorylated on three residues 250, 315 and 322, providing docking sites for host Shc1, p85, and Plcg1, respectively.</text>
</comment>
<keyword id="KW-0002">3D-structure</keyword>
<keyword id="KW-0025">Alternative splicing</keyword>
<keyword id="KW-0244">Early protein</keyword>
<keyword id="KW-1043">Host membrane</keyword>
<keyword id="KW-0945">Host-virus interaction</keyword>
<keyword id="KW-0472">Membrane</keyword>
<keyword id="KW-0553">Oncogene</keyword>
<keyword id="KW-0597">Phosphoprotein</keyword>
<keyword id="KW-1185">Reference proteome</keyword>
<keyword id="KW-0812">Transmembrane</keyword>
<keyword id="KW-1133">Transmembrane helix</keyword>
<accession>P03077</accession>
<reference key="1">
    <citation type="journal article" date="1980" name="Nature">
        <title>Coding potential and regulatory signals of the polyoma virus genome.</title>
        <authorList>
            <person name="Soeda E."/>
            <person name="Arrand J.R."/>
            <person name="Smolar N."/>
            <person name="Walsh J.E."/>
            <person name="Griffin B.E."/>
        </authorList>
    </citation>
    <scope>NUCLEOTIDE SEQUENCE [GENOMIC DNA]</scope>
</reference>
<reference key="2">
    <citation type="journal article" date="1983" name="Nature">
        <title>Polyoma virus transforming protein associates with the product of the c-src cellular gene.</title>
        <authorList>
            <person name="Courtneidge S.A."/>
            <person name="Smith A.E."/>
        </authorList>
    </citation>
    <scope>INTERACTION WITH HOST YES1</scope>
</reference>
<reference key="3">
    <citation type="journal article" date="1987" name="Nature">
        <title>Association of the polyomavirus middle-T antigen with c-yes protein.</title>
        <authorList>
            <person name="Kornbluth S."/>
            <person name="Sudol M."/>
            <person name="Hanafusa H."/>
        </authorList>
    </citation>
    <scope>INTERACTION WITH HOST SRC</scope>
</reference>
<reference key="4">
    <citation type="journal article" date="1988" name="EMBO J.">
        <title>Peptide antibodies to the human c-fyn gene product demonstrate pp59c-fyn is capable of complex formation with the middle-T antigen of polyomavirus.</title>
        <authorList>
            <person name="Cheng S.H."/>
            <person name="Harvey R."/>
            <person name="Espino P.C."/>
            <person name="Semba K."/>
            <person name="Yamamoto T."/>
            <person name="Toyoshima K."/>
            <person name="Smith A.E."/>
        </authorList>
    </citation>
    <scope>INTERACTION WITH HOST FYN</scope>
</reference>
<reference key="5">
    <citation type="journal article" date="1990" name="Cell">
        <title>Polyoma small and middle T antigens and SV40 small t antigen form stable complexes with protein phosphatase 2A.</title>
        <authorList>
            <person name="Pallas D.C."/>
            <person name="Shahrik L.K."/>
            <person name="Martin B.L."/>
            <person name="Jaspers S."/>
            <person name="Miller T.B. Jr."/>
            <person name="Brautigan D.L."/>
            <person name="Roberts T.M."/>
        </authorList>
    </citation>
    <scope>INTERACTION WITH HOST PPP2/PP2A</scope>
</reference>
<reference key="6">
    <citation type="journal article" date="1993" name="Proc. Natl. Acad. Sci. U.S.A.">
        <title>Mitosis-specific phosphorylation of polyomavirus middle-sized tumor antigen and its role during cell transformation.</title>
        <authorList>
            <person name="Perez L."/>
            <person name="Paasinen A."/>
            <person name="Schnierle B."/>
            <person name="Kach S."/>
            <person name="Senften M."/>
            <person name="Ballmer-Hofer K."/>
        </authorList>
    </citation>
    <scope>MUTAGENESIS OF THR-160</scope>
</reference>
<reference key="7">
    <citation type="journal article" date="1994" name="Proc. Natl. Acad. Sci. U.S.A.">
        <title>Polyoma middle tumor antigen interacts with SHC protein via the NPTY (Asn-Pro-Thr-Tyr) motif in middle tumor antigen.</title>
        <authorList>
            <person name="Campbell K.S."/>
            <person name="Ogris E."/>
            <person name="Burke B."/>
            <person name="Su W."/>
            <person name="Auger K.R."/>
            <person name="Druker B.J."/>
            <person name="Schaffhausen B.S."/>
            <person name="Roberts T.M."/>
            <person name="Pallas D.C."/>
        </authorList>
    </citation>
    <scope>MUTAGENESIS OF PRO-248 AND TYR-250</scope>
    <scope>INTERACTION WITH HOST SHC1</scope>
    <scope>DOMAIN</scope>
    <scope>PHOSPHORYLATION AT TYR-250</scope>
</reference>
<reference key="8">
    <citation type="journal article" date="1994" name="Science">
        <title>Association of polyomavirus middle tumor antigen with 14-3-3 proteins.</title>
        <authorList>
            <person name="Pallas D.C."/>
            <person name="Fu H."/>
            <person name="Haehnel L.C."/>
            <person name="Weller W."/>
            <person name="Collier R.J."/>
            <person name="Roberts T.M."/>
        </authorList>
    </citation>
    <scope>INTERACTION WITH HOST 14-3-3 PROTEINS</scope>
</reference>
<reference key="9">
    <citation type="journal article" date="1995" name="J. Biol. Chem.">
        <title>Association of Polyomavirus middle tumor antigen with phospholipase C-gamma 1.</title>
        <authorList>
            <person name="Su W."/>
            <person name="Liu W."/>
            <person name="Schaffhausen B.S."/>
            <person name="Roberts T.M."/>
        </authorList>
    </citation>
    <scope>MUTAGENESIS OF TYR-315 AND TYR-322</scope>
    <scope>INTERACTION WITH HOST PLCG1 AND P85</scope>
    <scope>PHOSPHORYLATION AT TYR-315 AND TYR-322</scope>
</reference>
<reference key="10">
    <citation type="journal article" date="1998" name="J. Virol.">
        <title>Serine 257 phosphorylation regulates association of polyomavirus middle T antigen with 14-3-3 proteins.</title>
        <authorList>
            <person name="Cullere X."/>
            <person name="Rose P."/>
            <person name="Thathamangalam U."/>
            <person name="Chatterjee A."/>
            <person name="Mullane K.P."/>
            <person name="Pallas D.C."/>
            <person name="Benjamin T.L."/>
            <person name="Roberts T.M."/>
            <person name="Schaffhausen B.S."/>
        </authorList>
    </citation>
    <scope>MUTAGENESIS OF SER-257</scope>
    <scope>PHOSPHORYLATION AT SER-257</scope>
</reference>
<reference key="11">
    <citation type="journal article" date="2006" name="J. Virol.">
        <title>Independent contributions of polyomavirus middle T and small T to the regulation of early and late gene expression and DNA replication.</title>
        <authorList>
            <person name="Chen L."/>
            <person name="Wang X."/>
            <person name="Fluck M.M."/>
        </authorList>
    </citation>
    <scope>FUNCTION</scope>
</reference>
<reference key="12">
    <citation type="journal article" date="2005" name="J. Exp. Med.">
        <title>Structural basis for the function and regulation of the receptor protein tyrosine phosphatase CD45.</title>
        <authorList>
            <person name="Nam H.J."/>
            <person name="Poy F."/>
            <person name="Saito H."/>
            <person name="Frederick C.A."/>
        </authorList>
    </citation>
    <scope>X-RAY CRYSTALLOGRAPHY (2.9 ANGSTROMS) OF 248-251</scope>
</reference>
<evidence type="ECO:0000255" key="1"/>
<evidence type="ECO:0000256" key="2">
    <source>
        <dbReference type="SAM" id="MobiDB-lite"/>
    </source>
</evidence>
<evidence type="ECO:0000269" key="3">
    <source>
    </source>
</evidence>
<evidence type="ECO:0000269" key="4">
    <source>
    </source>
</evidence>
<evidence type="ECO:0000269" key="5">
    <source>
    </source>
</evidence>
<evidence type="ECO:0000269" key="6">
    <source>
    </source>
</evidence>
<evidence type="ECO:0000269" key="7">
    <source>
    </source>
</evidence>
<evidence type="ECO:0000269" key="8">
    <source>
    </source>
</evidence>
<evidence type="ECO:0000269" key="9">
    <source>
    </source>
</evidence>
<evidence type="ECO:0000269" key="10">
    <source>
    </source>
</evidence>
<evidence type="ECO:0000269" key="11">
    <source>
    </source>
</evidence>
<evidence type="ECO:0000269" key="12">
    <source>
    </source>
</evidence>
<evidence type="ECO:0000305" key="13"/>
<organism>
    <name type="scientific">Murine polyomavirus (strain A2)</name>
    <name type="common">MPyV</name>
    <dbReference type="NCBI Taxonomy" id="10636"/>
    <lineage>
        <taxon>Viruses</taxon>
        <taxon>Monodnaviria</taxon>
        <taxon>Shotokuvirae</taxon>
        <taxon>Cossaviricota</taxon>
        <taxon>Papovaviricetes</taxon>
        <taxon>Sepolyvirales</taxon>
        <taxon>Polyomaviridae</taxon>
        <taxon>Alphapolyomavirus</taxon>
        <taxon>Mus musculus polyomavirus 1</taxon>
    </lineage>
</organism>